<keyword id="KW-0687">Ribonucleoprotein</keyword>
<keyword id="KW-0689">Ribosomal protein</keyword>
<keyword id="KW-0694">RNA-binding</keyword>
<keyword id="KW-0699">rRNA-binding</keyword>
<keyword id="KW-0820">tRNA-binding</keyword>
<feature type="chain" id="PRO_1000142457" description="Large ribosomal subunit protein uL5">
    <location>
        <begin position="1"/>
        <end position="180"/>
    </location>
</feature>
<dbReference type="EMBL" id="CP001015">
    <property type="protein sequence ID" value="ACF55162.1"/>
    <property type="molecule type" value="Genomic_DNA"/>
</dbReference>
<dbReference type="SMR" id="B5E6G7"/>
<dbReference type="KEGG" id="spx:SPG_0207"/>
<dbReference type="HOGENOM" id="CLU_061015_2_1_9"/>
<dbReference type="GO" id="GO:1990904">
    <property type="term" value="C:ribonucleoprotein complex"/>
    <property type="evidence" value="ECO:0007669"/>
    <property type="project" value="UniProtKB-KW"/>
</dbReference>
<dbReference type="GO" id="GO:0005840">
    <property type="term" value="C:ribosome"/>
    <property type="evidence" value="ECO:0007669"/>
    <property type="project" value="UniProtKB-KW"/>
</dbReference>
<dbReference type="GO" id="GO:0019843">
    <property type="term" value="F:rRNA binding"/>
    <property type="evidence" value="ECO:0007669"/>
    <property type="project" value="UniProtKB-UniRule"/>
</dbReference>
<dbReference type="GO" id="GO:0003735">
    <property type="term" value="F:structural constituent of ribosome"/>
    <property type="evidence" value="ECO:0007669"/>
    <property type="project" value="InterPro"/>
</dbReference>
<dbReference type="GO" id="GO:0000049">
    <property type="term" value="F:tRNA binding"/>
    <property type="evidence" value="ECO:0007669"/>
    <property type="project" value="UniProtKB-UniRule"/>
</dbReference>
<dbReference type="GO" id="GO:0006412">
    <property type="term" value="P:translation"/>
    <property type="evidence" value="ECO:0007669"/>
    <property type="project" value="UniProtKB-UniRule"/>
</dbReference>
<dbReference type="FunFam" id="3.30.1440.10:FF:000001">
    <property type="entry name" value="50S ribosomal protein L5"/>
    <property type="match status" value="1"/>
</dbReference>
<dbReference type="Gene3D" id="3.30.1440.10">
    <property type="match status" value="1"/>
</dbReference>
<dbReference type="HAMAP" id="MF_01333_B">
    <property type="entry name" value="Ribosomal_uL5_B"/>
    <property type="match status" value="1"/>
</dbReference>
<dbReference type="InterPro" id="IPR002132">
    <property type="entry name" value="Ribosomal_uL5"/>
</dbReference>
<dbReference type="InterPro" id="IPR020930">
    <property type="entry name" value="Ribosomal_uL5_bac-type"/>
</dbReference>
<dbReference type="InterPro" id="IPR031309">
    <property type="entry name" value="Ribosomal_uL5_C"/>
</dbReference>
<dbReference type="InterPro" id="IPR020929">
    <property type="entry name" value="Ribosomal_uL5_CS"/>
</dbReference>
<dbReference type="InterPro" id="IPR022803">
    <property type="entry name" value="Ribosomal_uL5_dom_sf"/>
</dbReference>
<dbReference type="InterPro" id="IPR031310">
    <property type="entry name" value="Ribosomal_uL5_N"/>
</dbReference>
<dbReference type="NCBIfam" id="NF000585">
    <property type="entry name" value="PRK00010.1"/>
    <property type="match status" value="1"/>
</dbReference>
<dbReference type="PANTHER" id="PTHR11994">
    <property type="entry name" value="60S RIBOSOMAL PROTEIN L11-RELATED"/>
    <property type="match status" value="1"/>
</dbReference>
<dbReference type="Pfam" id="PF00281">
    <property type="entry name" value="Ribosomal_L5"/>
    <property type="match status" value="1"/>
</dbReference>
<dbReference type="Pfam" id="PF00673">
    <property type="entry name" value="Ribosomal_L5_C"/>
    <property type="match status" value="1"/>
</dbReference>
<dbReference type="PIRSF" id="PIRSF002161">
    <property type="entry name" value="Ribosomal_L5"/>
    <property type="match status" value="1"/>
</dbReference>
<dbReference type="SUPFAM" id="SSF55282">
    <property type="entry name" value="RL5-like"/>
    <property type="match status" value="1"/>
</dbReference>
<dbReference type="PROSITE" id="PS00358">
    <property type="entry name" value="RIBOSOMAL_L5"/>
    <property type="match status" value="1"/>
</dbReference>
<organism>
    <name type="scientific">Streptococcus pneumoniae serotype 19F (strain G54)</name>
    <dbReference type="NCBI Taxonomy" id="512566"/>
    <lineage>
        <taxon>Bacteria</taxon>
        <taxon>Bacillati</taxon>
        <taxon>Bacillota</taxon>
        <taxon>Bacilli</taxon>
        <taxon>Lactobacillales</taxon>
        <taxon>Streptococcaceae</taxon>
        <taxon>Streptococcus</taxon>
    </lineage>
</organism>
<protein>
    <recommendedName>
        <fullName evidence="1">Large ribosomal subunit protein uL5</fullName>
    </recommendedName>
    <alternativeName>
        <fullName evidence="2">50S ribosomal protein L5</fullName>
    </alternativeName>
</protein>
<comment type="function">
    <text evidence="1">This is one of the proteins that bind and probably mediate the attachment of the 5S RNA into the large ribosomal subunit, where it forms part of the central protuberance. In the 70S ribosome it contacts protein S13 of the 30S subunit (bridge B1b), connecting the 2 subunits; this bridge is implicated in subunit movement. Contacts the P site tRNA; the 5S rRNA and some of its associated proteins might help stabilize positioning of ribosome-bound tRNAs.</text>
</comment>
<comment type="subunit">
    <text evidence="1">Part of the 50S ribosomal subunit; part of the 5S rRNA/L5/L18/L25 subcomplex. Contacts the 5S rRNA and the P site tRNA. Forms a bridge to the 30S subunit in the 70S ribosome.</text>
</comment>
<comment type="similarity">
    <text evidence="1">Belongs to the universal ribosomal protein uL5 family.</text>
</comment>
<gene>
    <name evidence="1" type="primary">rplE</name>
    <name type="ordered locus">SPG_0207</name>
</gene>
<sequence length="180" mass="19774">MANRLKEKYLNEVVPALTEQFNYSSVMAVPKVDKIVLNMGVGEAVSNAKSLEKAAEELALISGQKPLITKAKKSIAGFRLREGVAIGAKVTLRGERMYEFLDKLVSVSLPRVRDFHGVPTKSFDGRGNYTLGVKEQLIFPEINFDDVDKTRGLDIVIVTTANTDEESRALLTGLGMPFAK</sequence>
<name>RL5_STRP4</name>
<evidence type="ECO:0000255" key="1">
    <source>
        <dbReference type="HAMAP-Rule" id="MF_01333"/>
    </source>
</evidence>
<evidence type="ECO:0000305" key="2"/>
<reference key="1">
    <citation type="journal article" date="2001" name="Microb. Drug Resist.">
        <title>Annotated draft genomic sequence from a Streptococcus pneumoniae type 19F clinical isolate.</title>
        <authorList>
            <person name="Dopazo J."/>
            <person name="Mendoza A."/>
            <person name="Herrero J."/>
            <person name="Caldara F."/>
            <person name="Humbert Y."/>
            <person name="Friedli L."/>
            <person name="Guerrier M."/>
            <person name="Grand-Schenk E."/>
            <person name="Gandin C."/>
            <person name="de Francesco M."/>
            <person name="Polissi A."/>
            <person name="Buell G."/>
            <person name="Feger G."/>
            <person name="Garcia E."/>
            <person name="Peitsch M."/>
            <person name="Garcia-Bustos J.F."/>
        </authorList>
    </citation>
    <scope>NUCLEOTIDE SEQUENCE [LARGE SCALE GENOMIC DNA]</scope>
    <source>
        <strain>G54</strain>
    </source>
</reference>
<reference key="2">
    <citation type="submission" date="2008-03" db="EMBL/GenBank/DDBJ databases">
        <title>Pneumococcal beta glucoside metabolism investigated by whole genome comparison.</title>
        <authorList>
            <person name="Mulas L."/>
            <person name="Trappetti C."/>
            <person name="Hakenbeck R."/>
            <person name="Iannelli F."/>
            <person name="Pozzi G."/>
            <person name="Davidsen T.M."/>
            <person name="Tettelin H."/>
            <person name="Oggioni M."/>
        </authorList>
    </citation>
    <scope>NUCLEOTIDE SEQUENCE [LARGE SCALE GENOMIC DNA]</scope>
    <source>
        <strain>G54</strain>
    </source>
</reference>
<accession>B5E6G7</accession>
<proteinExistence type="inferred from homology"/>